<name>HRCA_SYNJA</name>
<feature type="chain" id="PRO_1000010468" description="Heat-inducible transcription repressor HrcA">
    <location>
        <begin position="1"/>
        <end position="392"/>
    </location>
</feature>
<keyword id="KW-0678">Repressor</keyword>
<keyword id="KW-0346">Stress response</keyword>
<keyword id="KW-0804">Transcription</keyword>
<keyword id="KW-0805">Transcription regulation</keyword>
<protein>
    <recommendedName>
        <fullName evidence="1">Heat-inducible transcription repressor HrcA</fullName>
    </recommendedName>
</protein>
<gene>
    <name evidence="1" type="primary">hrcA</name>
    <name type="ordered locus">CYA_2590</name>
</gene>
<reference key="1">
    <citation type="journal article" date="2007" name="ISME J.">
        <title>Population level functional diversity in a microbial community revealed by comparative genomic and metagenomic analyses.</title>
        <authorList>
            <person name="Bhaya D."/>
            <person name="Grossman A.R."/>
            <person name="Steunou A.-S."/>
            <person name="Khuri N."/>
            <person name="Cohan F.M."/>
            <person name="Hamamura N."/>
            <person name="Melendrez M.C."/>
            <person name="Bateson M.M."/>
            <person name="Ward D.M."/>
            <person name="Heidelberg J.F."/>
        </authorList>
    </citation>
    <scope>NUCLEOTIDE SEQUENCE [LARGE SCALE GENOMIC DNA]</scope>
    <source>
        <strain>JA-3-3Ab</strain>
    </source>
</reference>
<organism>
    <name type="scientific">Synechococcus sp. (strain JA-3-3Ab)</name>
    <name type="common">Cyanobacteria bacterium Yellowstone A-Prime</name>
    <dbReference type="NCBI Taxonomy" id="321327"/>
    <lineage>
        <taxon>Bacteria</taxon>
        <taxon>Bacillati</taxon>
        <taxon>Cyanobacteriota</taxon>
        <taxon>Cyanophyceae</taxon>
        <taxon>Synechococcales</taxon>
        <taxon>Synechococcaceae</taxon>
        <taxon>Synechococcus</taxon>
    </lineage>
</organism>
<accession>Q2JRN9</accession>
<proteinExistence type="inferred from homology"/>
<comment type="function">
    <text evidence="1">Negative regulator of class I heat shock genes (grpE-dnaK-dnaJ and groELS operons). Prevents heat-shock induction of these operons.</text>
</comment>
<comment type="similarity">
    <text evidence="1">Belongs to the HrcA family.</text>
</comment>
<dbReference type="EMBL" id="CP000239">
    <property type="protein sequence ID" value="ABD00707.1"/>
    <property type="molecule type" value="Genomic_DNA"/>
</dbReference>
<dbReference type="RefSeq" id="WP_011431380.1">
    <property type="nucleotide sequence ID" value="NC_007775.1"/>
</dbReference>
<dbReference type="SMR" id="Q2JRN9"/>
<dbReference type="STRING" id="321327.CYA_2590"/>
<dbReference type="KEGG" id="cya:CYA_2590"/>
<dbReference type="eggNOG" id="COG1420">
    <property type="taxonomic scope" value="Bacteria"/>
</dbReference>
<dbReference type="HOGENOM" id="CLU_050019_1_0_3"/>
<dbReference type="OrthoDB" id="9783139at2"/>
<dbReference type="Proteomes" id="UP000008818">
    <property type="component" value="Chromosome"/>
</dbReference>
<dbReference type="GO" id="GO:0003677">
    <property type="term" value="F:DNA binding"/>
    <property type="evidence" value="ECO:0007669"/>
    <property type="project" value="InterPro"/>
</dbReference>
<dbReference type="GO" id="GO:0003700">
    <property type="term" value="F:DNA-binding transcription factor activity"/>
    <property type="evidence" value="ECO:0007669"/>
    <property type="project" value="InterPro"/>
</dbReference>
<dbReference type="GO" id="GO:0045892">
    <property type="term" value="P:negative regulation of DNA-templated transcription"/>
    <property type="evidence" value="ECO:0007669"/>
    <property type="project" value="UniProtKB-UniRule"/>
</dbReference>
<dbReference type="Gene3D" id="3.30.450.40">
    <property type="match status" value="1"/>
</dbReference>
<dbReference type="Gene3D" id="1.10.10.10">
    <property type="entry name" value="Winged helix-like DNA-binding domain superfamily/Winged helix DNA-binding domain"/>
    <property type="match status" value="1"/>
</dbReference>
<dbReference type="HAMAP" id="MF_00081">
    <property type="entry name" value="HrcA"/>
    <property type="match status" value="1"/>
</dbReference>
<dbReference type="InterPro" id="IPR001034">
    <property type="entry name" value="DeoR_HTH"/>
</dbReference>
<dbReference type="InterPro" id="IPR029016">
    <property type="entry name" value="GAF-like_dom_sf"/>
</dbReference>
<dbReference type="InterPro" id="IPR002571">
    <property type="entry name" value="HrcA"/>
</dbReference>
<dbReference type="InterPro" id="IPR021153">
    <property type="entry name" value="HrcA_C"/>
</dbReference>
<dbReference type="InterPro" id="IPR036388">
    <property type="entry name" value="WH-like_DNA-bd_sf"/>
</dbReference>
<dbReference type="InterPro" id="IPR036390">
    <property type="entry name" value="WH_DNA-bd_sf"/>
</dbReference>
<dbReference type="PANTHER" id="PTHR34824">
    <property type="entry name" value="HEAT-INDUCIBLE TRANSCRIPTION REPRESSOR HRCA"/>
    <property type="match status" value="1"/>
</dbReference>
<dbReference type="PANTHER" id="PTHR34824:SF1">
    <property type="entry name" value="HEAT-INDUCIBLE TRANSCRIPTION REPRESSOR HRCA"/>
    <property type="match status" value="1"/>
</dbReference>
<dbReference type="Pfam" id="PF01628">
    <property type="entry name" value="HrcA"/>
    <property type="match status" value="1"/>
</dbReference>
<dbReference type="Pfam" id="PF08220">
    <property type="entry name" value="HTH_DeoR"/>
    <property type="match status" value="1"/>
</dbReference>
<dbReference type="PIRSF" id="PIRSF005485">
    <property type="entry name" value="HrcA"/>
    <property type="match status" value="1"/>
</dbReference>
<dbReference type="SUPFAM" id="SSF55781">
    <property type="entry name" value="GAF domain-like"/>
    <property type="match status" value="1"/>
</dbReference>
<dbReference type="SUPFAM" id="SSF46785">
    <property type="entry name" value="Winged helix' DNA-binding domain"/>
    <property type="match status" value="1"/>
</dbReference>
<evidence type="ECO:0000255" key="1">
    <source>
        <dbReference type="HAMAP-Rule" id="MF_00081"/>
    </source>
</evidence>
<sequence length="392" mass="43291">MKLELTPRQRKILWATVRRYIATAEPVGSKTLAQSYNLGVSTATIRNDLATLEQVGLLFQPHTSAGRIPSDFGYRVYVNDLLSSANMDGIPNDAPQPEPHPALQQLLDQLNRELGDDLDSFLQRVAQLLAHLSGCIALITPPQGPVVAVHHVQLLSVGPGRVMVLVVTDSYQTHSALVSPPDWPDDRREDLEDELQLLSNFLTLKLRGKTFAELQDLSWLKLDEEFRAYSHWLQQLLRSVVQRYLRPSLGQVFSAGMTELMRQPEFSQAQRMQAVAQLLEEGSEQLQGMIGLYSTPGCLFTSEAALSAPSAREKASSSTADQDPSHNVPVIIYIGSENPLESLHHCTVIASVYRRRSAPLGTVTLLGPTRMAYERSIAAVQTVASHLTRALA</sequence>